<organism>
    <name type="scientific">Reovirus type 3 (strain Dearing)</name>
    <name type="common">T3D</name>
    <name type="synonym">Mammalian orthoreovirus 3</name>
    <dbReference type="NCBI Taxonomy" id="10886"/>
    <lineage>
        <taxon>Viruses</taxon>
        <taxon>Riboviria</taxon>
        <taxon>Orthornavirae</taxon>
        <taxon>Duplornaviricota</taxon>
        <taxon>Resentoviricetes</taxon>
        <taxon>Reovirales</taxon>
        <taxon>Spinareoviridae</taxon>
        <taxon>Orthoreovirus</taxon>
        <taxon>Mammalian orthoreovirus</taxon>
    </lineage>
</organism>
<gene>
    <name type="primary">S2</name>
</gene>
<comment type="function">
    <text>Inner capsid (core) component.</text>
</comment>
<comment type="subunit">
    <text evidence="1">Interacts with protein mu-NS; in viral inclusions.</text>
</comment>
<comment type="subcellular location">
    <subcellularLocation>
        <location evidence="2">Virion</location>
    </subcellularLocation>
    <text>Found in the inner capsid (150 copies).</text>
</comment>
<comment type="miscellaneous">
    <text>Mutant ts447 is temperature-sensitive.</text>
</comment>
<comment type="similarity">
    <text evidence="2">Belongs to the orthoreovirus sigma-1 protein family.</text>
</comment>
<comment type="sequence caution" evidence="2">
    <conflict type="frameshift">
        <sequence resource="EMBL" id="J02327"/>
    </conflict>
</comment>
<name>SIGM2_REOVD</name>
<accession>P03525</accession>
<accession>Q6LEC8</accession>
<organismHost>
    <name type="scientific">Mammalia</name>
    <dbReference type="NCBI Taxonomy" id="40674"/>
</organismHost>
<proteinExistence type="evidence at protein level"/>
<keyword id="KW-0002">3D-structure</keyword>
<keyword id="KW-0167">Capsid protein</keyword>
<keyword id="KW-1153">Inner capsid protein</keyword>
<keyword id="KW-0946">Virion</keyword>
<sequence>MARAAFLFKTVGFGGLQNVPINDELSSHLLRAGNSPWQLTQFLDWISLGRGLATSALVPTAGSRYYQMSCLLSGTLQIPFRPNHRWGDIRFLRLVWSAPTLDGLVVAPPQVLAQPALQAQADRVYDCDDYPFLARDPRFKHRVYQQLSAVTLLNLTGFGPISYVRVDEDMWSGDVNQLLMNYFGHTFAEIAYTLCQASANRPWEYDGTYARMTQIVLSLFWLSYVGVIHQQNTYRTFYFQCNRRGDAAEVWILSCSLNHSAQIRPGNRSLFVMPTSPDWNMDVNLILSSTLTGCLCSGSQLPLIDNNSVPAVSRNIHGWTGRAGNQLHGFQVRRMVTEFCDRLRRDGVMTQAQQNQVEALADQTQQFKRDKLETWAREDDQYNQAHPNSTMFRTKPFTNAQWGRGNTGATSAAIAALI</sequence>
<dbReference type="EMBL" id="M25780">
    <property type="protein sequence ID" value="AAA47279.1"/>
    <property type="molecule type" value="Genomic_DNA"/>
</dbReference>
<dbReference type="EMBL" id="J02327">
    <property type="status" value="NOT_ANNOTATED_CDS"/>
    <property type="molecule type" value="Genomic_RNA"/>
</dbReference>
<dbReference type="EMBL" id="L19776">
    <property type="protein sequence ID" value="AAA47261.1"/>
    <property type="molecule type" value="Genomic_RNA"/>
</dbReference>
<dbReference type="EMBL" id="EF494442">
    <property type="protein sequence ID" value="ABP48920.1"/>
    <property type="molecule type" value="Genomic_RNA"/>
</dbReference>
<dbReference type="PIR" id="A31475">
    <property type="entry name" value="FOXR3D"/>
</dbReference>
<dbReference type="RefSeq" id="YP_010839458.1">
    <property type="nucleotide sequence ID" value="NC_077846.1"/>
</dbReference>
<dbReference type="PDB" id="9CYX">
    <property type="method" value="EM"/>
    <property type="resolution" value="3.30 A"/>
    <property type="chains" value="Q/R=2-418"/>
</dbReference>
<dbReference type="PDB" id="9CYY">
    <property type="method" value="EM"/>
    <property type="resolution" value="3.00 A"/>
    <property type="chains" value="0/C=1-418"/>
</dbReference>
<dbReference type="PDBsum" id="9CYX"/>
<dbReference type="PDBsum" id="9CYY"/>
<dbReference type="EMDB" id="EMD-13149"/>
<dbReference type="EMDB" id="EMD-13150"/>
<dbReference type="EMDB" id="EMD-46053"/>
<dbReference type="EMDB" id="EMD-46054"/>
<dbReference type="SMR" id="P03525"/>
<dbReference type="GeneID" id="80549156"/>
<dbReference type="Proteomes" id="UP000006373">
    <property type="component" value="Genome"/>
</dbReference>
<dbReference type="Proteomes" id="UP000165799">
    <property type="component" value="Genome"/>
</dbReference>
<dbReference type="GO" id="GO:0039625">
    <property type="term" value="C:viral inner capsid"/>
    <property type="evidence" value="ECO:0007669"/>
    <property type="project" value="UniProtKB-KW"/>
</dbReference>
<dbReference type="Gene3D" id="1.10.287.1520">
    <property type="match status" value="1"/>
</dbReference>
<dbReference type="InterPro" id="IPR004317">
    <property type="entry name" value="Sigma_1_2_reovir"/>
</dbReference>
<dbReference type="Pfam" id="PF03084">
    <property type="entry name" value="Sigma_1_2"/>
    <property type="match status" value="1"/>
</dbReference>
<evidence type="ECO:0000250" key="1"/>
<evidence type="ECO:0000305" key="2"/>
<protein>
    <recommendedName>
        <fullName>Inner capsid protein sigma-2</fullName>
        <shortName>Sigma2</shortName>
    </recommendedName>
</protein>
<reference key="1">
    <citation type="journal article" date="1989" name="Virology">
        <title>The sequences of the S2 genome segments of reovirus serotype 3 and of the dsRNA-negative mutant ts447.</title>
        <authorList>
            <person name="Wiener J.R."/>
            <person name="McLaughlin T."/>
            <person name="Joklik W.K."/>
        </authorList>
    </citation>
    <scope>NUCLEOTIDE SEQUENCE [GENOMIC DNA]</scope>
    <source>
        <strain>Mutant ts447</strain>
    </source>
</reference>
<reference key="2">
    <citation type="journal article" date="1982" name="Proc. Natl. Acad. Sci. U.S.A.">
        <title>Cloning the double-stranded RNA genes of reovirus: sequence of the cloned S2 gene.</title>
        <authorList>
            <person name="Cashdollar L.W."/>
            <person name="Esparza J."/>
            <person name="Hudson G.R."/>
            <person name="Chmelo R.A."/>
            <person name="Lee P.W.K."/>
            <person name="Joklik W.K."/>
        </authorList>
    </citation>
    <scope>NUCLEOTIDE SEQUENCE [GENOMIC RNA]</scope>
</reference>
<reference key="3">
    <citation type="journal article" date="1991" name="J. Virol.">
        <title>The S2 gene nucleotide sequences of prototype strains of the three reovirus serotypes: characterization of reovirus core protein sigma 2.</title>
        <authorList>
            <person name="Dermody T.S."/>
            <person name="Schiff L.A."/>
            <person name="Nibert M.L."/>
            <person name="Coombs K.M."/>
            <person name="Fields B.N."/>
        </authorList>
    </citation>
    <scope>NUCLEOTIDE SEQUENCE [GENOMIC RNA]</scope>
</reference>
<reference key="4">
    <citation type="journal article" date="2007" name="Cell Host Microbe">
        <title>A plasmid-based reverse genetics system for animal double-stranded RNA viruses.</title>
        <authorList>
            <person name="Kobayashi T."/>
            <person name="Antar A.A."/>
            <person name="Boehme K.W."/>
            <person name="Danthi P."/>
            <person name="Eby E.A."/>
            <person name="Guglielmi K.M."/>
            <person name="Holm G.H."/>
            <person name="Johnson E.M."/>
            <person name="Maginnis M.S."/>
            <person name="Naik S."/>
            <person name="Skelton W.B."/>
            <person name="Wetzel J.D."/>
            <person name="Wilson G.J."/>
            <person name="Chappell J.D."/>
            <person name="Dermody T.S."/>
        </authorList>
    </citation>
    <scope>NUCLEOTIDE SEQUENCE [GENOMIC RNA]</scope>
    <source>
        <strain>Infectious clone</strain>
    </source>
</reference>
<feature type="chain" id="PRO_0000222749" description="Inner capsid protein sigma-2">
    <location>
        <begin position="1"/>
        <end position="418"/>
    </location>
</feature>
<feature type="sequence variant" description="In strain: Mutant ts447; temperature-sensitive.">
    <original>A</original>
    <variation>V</variation>
    <location>
        <position position="188"/>
    </location>
</feature>
<feature type="sequence variant" description="In strain: Mutant ts447; temperature-sensitive.">
    <original>A</original>
    <variation>V</variation>
    <location>
        <position position="323"/>
    </location>
</feature>
<feature type="sequence variant" description="In strain: Mutant ts447; temperature-sensitive.">
    <original>N</original>
    <variation>D</variation>
    <location>
        <position position="383"/>
    </location>
</feature>
<feature type="sequence conflict" description="In Ref. 2; J02327." evidence="2" ref="2">
    <original>H</original>
    <variation>Y</variation>
    <location>
        <position position="259"/>
    </location>
</feature>